<protein>
    <recommendedName>
        <fullName evidence="1">Ribonuclease Z</fullName>
        <shortName evidence="1">RNase Z</shortName>
        <ecNumber evidence="1">3.1.26.11</ecNumber>
    </recommendedName>
    <alternativeName>
        <fullName evidence="1">tRNA 3 endonuclease</fullName>
    </alternativeName>
    <alternativeName>
        <fullName evidence="1">tRNase Z</fullName>
    </alternativeName>
</protein>
<feature type="chain" id="PRO_1000070304" description="Ribonuclease Z">
    <location>
        <begin position="1"/>
        <end position="285"/>
    </location>
</feature>
<feature type="active site" description="Proton acceptor" evidence="1">
    <location>
        <position position="65"/>
    </location>
</feature>
<feature type="binding site" evidence="1">
    <location>
        <position position="61"/>
    </location>
    <ligand>
        <name>Zn(2+)</name>
        <dbReference type="ChEBI" id="CHEBI:29105"/>
        <label>1</label>
        <note>catalytic</note>
    </ligand>
</feature>
<feature type="binding site" evidence="1">
    <location>
        <position position="63"/>
    </location>
    <ligand>
        <name>Zn(2+)</name>
        <dbReference type="ChEBI" id="CHEBI:29105"/>
        <label>1</label>
        <note>catalytic</note>
    </ligand>
</feature>
<feature type="binding site" evidence="1">
    <location>
        <position position="65"/>
    </location>
    <ligand>
        <name>Zn(2+)</name>
        <dbReference type="ChEBI" id="CHEBI:29105"/>
        <label>2</label>
        <note>catalytic</note>
    </ligand>
</feature>
<feature type="binding site" evidence="1">
    <location>
        <position position="66"/>
    </location>
    <ligand>
        <name>Zn(2+)</name>
        <dbReference type="ChEBI" id="CHEBI:29105"/>
        <label>2</label>
        <note>catalytic</note>
    </ligand>
</feature>
<feature type="binding site" evidence="1">
    <location>
        <position position="152"/>
    </location>
    <ligand>
        <name>Zn(2+)</name>
        <dbReference type="ChEBI" id="CHEBI:29105"/>
        <label>1</label>
        <note>catalytic</note>
    </ligand>
</feature>
<feature type="binding site" evidence="1">
    <location>
        <position position="175"/>
    </location>
    <ligand>
        <name>Zn(2+)</name>
        <dbReference type="ChEBI" id="CHEBI:29105"/>
        <label>1</label>
        <note>catalytic</note>
    </ligand>
</feature>
<feature type="binding site" evidence="1">
    <location>
        <position position="175"/>
    </location>
    <ligand>
        <name>Zn(2+)</name>
        <dbReference type="ChEBI" id="CHEBI:29105"/>
        <label>2</label>
        <note>catalytic</note>
    </ligand>
</feature>
<feature type="binding site" evidence="1">
    <location>
        <position position="239"/>
    </location>
    <ligand>
        <name>Zn(2+)</name>
        <dbReference type="ChEBI" id="CHEBI:29105"/>
        <label>2</label>
        <note>catalytic</note>
    </ligand>
</feature>
<proteinExistence type="inferred from homology"/>
<keyword id="KW-0255">Endonuclease</keyword>
<keyword id="KW-0378">Hydrolase</keyword>
<keyword id="KW-0479">Metal-binding</keyword>
<keyword id="KW-0540">Nuclease</keyword>
<keyword id="KW-0819">tRNA processing</keyword>
<keyword id="KW-0862">Zinc</keyword>
<sequence>MIEVTLLGTGSPVPDARRAGPSTLVRAGGHAFLVDCGRGVQLRMAAAGIAANGLSALLLTHLHSDHIADLGDLLITRWVTTFTDQVPLQIIGPPGTAETVTAMLAAFGRDIGYRIAHHPDLTAPPPVEVHEVTEGVAWDHDGVTVRVAPTDHRPVAPTIGFRVEHADASVVLAGDTVPCATLDALAAGAGALVHTAIRKDLVELAPQQRVREVCEYHSSVEEAAETAERAGVGILVLTHYLPPIAPGQEADWRARAATAFPRQIELGDDLHRVEVHPGVCVKPAG</sequence>
<name>RNZ_MYCSK</name>
<evidence type="ECO:0000255" key="1">
    <source>
        <dbReference type="HAMAP-Rule" id="MF_01818"/>
    </source>
</evidence>
<reference key="1">
    <citation type="submission" date="2006-12" db="EMBL/GenBank/DDBJ databases">
        <title>Complete sequence of chromosome of Mycobacterium sp. KMS.</title>
        <authorList>
            <consortium name="US DOE Joint Genome Institute"/>
            <person name="Copeland A."/>
            <person name="Lucas S."/>
            <person name="Lapidus A."/>
            <person name="Barry K."/>
            <person name="Detter J.C."/>
            <person name="Glavina del Rio T."/>
            <person name="Hammon N."/>
            <person name="Israni S."/>
            <person name="Dalin E."/>
            <person name="Tice H."/>
            <person name="Pitluck S."/>
            <person name="Kiss H."/>
            <person name="Brettin T."/>
            <person name="Bruce D."/>
            <person name="Han C."/>
            <person name="Tapia R."/>
            <person name="Gilna P."/>
            <person name="Schmutz J."/>
            <person name="Larimer F."/>
            <person name="Land M."/>
            <person name="Hauser L."/>
            <person name="Kyrpides N."/>
            <person name="Mikhailova N."/>
            <person name="Miller C.D."/>
            <person name="Richardson P."/>
        </authorList>
    </citation>
    <scope>NUCLEOTIDE SEQUENCE [LARGE SCALE GENOMIC DNA]</scope>
    <source>
        <strain>KMS</strain>
    </source>
</reference>
<dbReference type="EC" id="3.1.26.11" evidence="1"/>
<dbReference type="EMBL" id="CP000518">
    <property type="protein sequence ID" value="ABL92772.1"/>
    <property type="molecule type" value="Genomic_DNA"/>
</dbReference>
<dbReference type="SMR" id="A1UIW4"/>
<dbReference type="STRING" id="189918.Mkms_3578"/>
<dbReference type="KEGG" id="mkm:Mkms_3578"/>
<dbReference type="HOGENOM" id="CLU_031317_0_0_11"/>
<dbReference type="OrthoDB" id="4137979at2"/>
<dbReference type="GO" id="GO:0042781">
    <property type="term" value="F:3'-tRNA processing endoribonuclease activity"/>
    <property type="evidence" value="ECO:0007669"/>
    <property type="project" value="UniProtKB-UniRule"/>
</dbReference>
<dbReference type="GO" id="GO:0046872">
    <property type="term" value="F:metal ion binding"/>
    <property type="evidence" value="ECO:0007669"/>
    <property type="project" value="UniProtKB-KW"/>
</dbReference>
<dbReference type="CDD" id="cd07719">
    <property type="entry name" value="arylsulfatase_AtsA-like_MBL-fold"/>
    <property type="match status" value="1"/>
</dbReference>
<dbReference type="Gene3D" id="3.60.15.10">
    <property type="entry name" value="Ribonuclease Z/Hydroxyacylglutathione hydrolase-like"/>
    <property type="match status" value="1"/>
</dbReference>
<dbReference type="HAMAP" id="MF_01818">
    <property type="entry name" value="RNase_Z_BN"/>
    <property type="match status" value="1"/>
</dbReference>
<dbReference type="InterPro" id="IPR044094">
    <property type="entry name" value="AtsA-like_MBL-fold"/>
</dbReference>
<dbReference type="InterPro" id="IPR001279">
    <property type="entry name" value="Metallo-B-lactamas"/>
</dbReference>
<dbReference type="InterPro" id="IPR036866">
    <property type="entry name" value="RibonucZ/Hydroxyglut_hydro"/>
</dbReference>
<dbReference type="InterPro" id="IPR013471">
    <property type="entry name" value="RNase_Z/BN"/>
</dbReference>
<dbReference type="NCBIfam" id="NF000806">
    <property type="entry name" value="PRK00055.2-4"/>
    <property type="match status" value="1"/>
</dbReference>
<dbReference type="PANTHER" id="PTHR46018">
    <property type="entry name" value="ZINC PHOSPHODIESTERASE ELAC PROTEIN 1"/>
    <property type="match status" value="1"/>
</dbReference>
<dbReference type="PANTHER" id="PTHR46018:SF2">
    <property type="entry name" value="ZINC PHOSPHODIESTERASE ELAC PROTEIN 1"/>
    <property type="match status" value="1"/>
</dbReference>
<dbReference type="Pfam" id="PF12706">
    <property type="entry name" value="Lactamase_B_2"/>
    <property type="match status" value="1"/>
</dbReference>
<dbReference type="SMART" id="SM00849">
    <property type="entry name" value="Lactamase_B"/>
    <property type="match status" value="1"/>
</dbReference>
<dbReference type="SUPFAM" id="SSF56281">
    <property type="entry name" value="Metallo-hydrolase/oxidoreductase"/>
    <property type="match status" value="1"/>
</dbReference>
<organism>
    <name type="scientific">Mycobacterium sp. (strain KMS)</name>
    <dbReference type="NCBI Taxonomy" id="189918"/>
    <lineage>
        <taxon>Bacteria</taxon>
        <taxon>Bacillati</taxon>
        <taxon>Actinomycetota</taxon>
        <taxon>Actinomycetes</taxon>
        <taxon>Mycobacteriales</taxon>
        <taxon>Mycobacteriaceae</taxon>
        <taxon>Mycobacterium</taxon>
    </lineage>
</organism>
<comment type="function">
    <text evidence="1">Zinc phosphodiesterase, which displays some tRNA 3'-processing endonuclease activity. Probably involved in tRNA maturation, by removing a 3'-trailer from precursor tRNA.</text>
</comment>
<comment type="catalytic activity">
    <reaction evidence="1">
        <text>Endonucleolytic cleavage of RNA, removing extra 3' nucleotides from tRNA precursor, generating 3' termini of tRNAs. A 3'-hydroxy group is left at the tRNA terminus and a 5'-phosphoryl group is left at the trailer molecule.</text>
        <dbReference type="EC" id="3.1.26.11"/>
    </reaction>
</comment>
<comment type="cofactor">
    <cofactor evidence="1">
        <name>Zn(2+)</name>
        <dbReference type="ChEBI" id="CHEBI:29105"/>
    </cofactor>
    <text evidence="1">Binds 2 Zn(2+) ions.</text>
</comment>
<comment type="subunit">
    <text evidence="1">Homodimer.</text>
</comment>
<comment type="similarity">
    <text evidence="1">Belongs to the RNase Z family.</text>
</comment>
<gene>
    <name evidence="1" type="primary">rnz</name>
    <name type="ordered locus">Mkms_3578</name>
</gene>
<accession>A1UIW4</accession>